<protein>
    <recommendedName>
        <fullName evidence="1">UPF0434 protein Shew_1640</fullName>
    </recommendedName>
</protein>
<organism>
    <name type="scientific">Shewanella loihica (strain ATCC BAA-1088 / PV-4)</name>
    <dbReference type="NCBI Taxonomy" id="323850"/>
    <lineage>
        <taxon>Bacteria</taxon>
        <taxon>Pseudomonadati</taxon>
        <taxon>Pseudomonadota</taxon>
        <taxon>Gammaproteobacteria</taxon>
        <taxon>Alteromonadales</taxon>
        <taxon>Shewanellaceae</taxon>
        <taxon>Shewanella</taxon>
    </lineage>
</organism>
<accession>A3QDF9</accession>
<feature type="chain" id="PRO_0000291165" description="UPF0434 protein Shew_1640">
    <location>
        <begin position="1"/>
        <end position="59"/>
    </location>
</feature>
<evidence type="ECO:0000255" key="1">
    <source>
        <dbReference type="HAMAP-Rule" id="MF_01187"/>
    </source>
</evidence>
<reference key="1">
    <citation type="submission" date="2007-03" db="EMBL/GenBank/DDBJ databases">
        <title>Complete sequence of Shewanella loihica PV-4.</title>
        <authorList>
            <consortium name="US DOE Joint Genome Institute"/>
            <person name="Copeland A."/>
            <person name="Lucas S."/>
            <person name="Lapidus A."/>
            <person name="Barry K."/>
            <person name="Detter J.C."/>
            <person name="Glavina del Rio T."/>
            <person name="Hammon N."/>
            <person name="Israni S."/>
            <person name="Dalin E."/>
            <person name="Tice H."/>
            <person name="Pitluck S."/>
            <person name="Chain P."/>
            <person name="Malfatti S."/>
            <person name="Shin M."/>
            <person name="Vergez L."/>
            <person name="Schmutz J."/>
            <person name="Larimer F."/>
            <person name="Land M."/>
            <person name="Hauser L."/>
            <person name="Kyrpides N."/>
            <person name="Mikhailova N."/>
            <person name="Romine M.F."/>
            <person name="Serres G."/>
            <person name="Fredrickson J."/>
            <person name="Tiedje J."/>
            <person name="Richardson P."/>
        </authorList>
    </citation>
    <scope>NUCLEOTIDE SEQUENCE [LARGE SCALE GENOMIC DNA]</scope>
    <source>
        <strain>ATCC BAA-1088 / PV-4</strain>
    </source>
</reference>
<dbReference type="EMBL" id="CP000606">
    <property type="protein sequence ID" value="ABO23507.1"/>
    <property type="molecule type" value="Genomic_DNA"/>
</dbReference>
<dbReference type="RefSeq" id="WP_011865439.1">
    <property type="nucleotide sequence ID" value="NC_009092.1"/>
</dbReference>
<dbReference type="SMR" id="A3QDF9"/>
<dbReference type="STRING" id="323850.Shew_1640"/>
<dbReference type="KEGG" id="slo:Shew_1640"/>
<dbReference type="eggNOG" id="COG2835">
    <property type="taxonomic scope" value="Bacteria"/>
</dbReference>
<dbReference type="HOGENOM" id="CLU_155659_3_1_6"/>
<dbReference type="OrthoDB" id="9812205at2"/>
<dbReference type="Proteomes" id="UP000001558">
    <property type="component" value="Chromosome"/>
</dbReference>
<dbReference type="GO" id="GO:0005829">
    <property type="term" value="C:cytosol"/>
    <property type="evidence" value="ECO:0007669"/>
    <property type="project" value="TreeGrafter"/>
</dbReference>
<dbReference type="FunFam" id="2.20.25.10:FF:000002">
    <property type="entry name" value="UPF0434 protein YcaR"/>
    <property type="match status" value="1"/>
</dbReference>
<dbReference type="Gene3D" id="2.20.25.10">
    <property type="match status" value="1"/>
</dbReference>
<dbReference type="HAMAP" id="MF_01187">
    <property type="entry name" value="UPF0434"/>
    <property type="match status" value="1"/>
</dbReference>
<dbReference type="InterPro" id="IPR005651">
    <property type="entry name" value="Trm112-like"/>
</dbReference>
<dbReference type="PANTHER" id="PTHR33505:SF4">
    <property type="entry name" value="PROTEIN PREY, MITOCHONDRIAL"/>
    <property type="match status" value="1"/>
</dbReference>
<dbReference type="PANTHER" id="PTHR33505">
    <property type="entry name" value="ZGC:162634"/>
    <property type="match status" value="1"/>
</dbReference>
<dbReference type="Pfam" id="PF03966">
    <property type="entry name" value="Trm112p"/>
    <property type="match status" value="1"/>
</dbReference>
<dbReference type="SUPFAM" id="SSF158997">
    <property type="entry name" value="Trm112p-like"/>
    <property type="match status" value="1"/>
</dbReference>
<sequence>MAFDKKLLEIVACPVCKGKLEYDKANQQLICKADRLAYAINEGIPVLLENKATPWNEEA</sequence>
<name>Y1640_SHELP</name>
<proteinExistence type="inferred from homology"/>
<keyword id="KW-1185">Reference proteome</keyword>
<gene>
    <name type="ordered locus">Shew_1640</name>
</gene>
<comment type="similarity">
    <text evidence="1">Belongs to the UPF0434 family.</text>
</comment>